<gene>
    <name evidence="15" type="primary">TPR2</name>
    <name evidence="14" type="synonym">ASP1</name>
    <name evidence="13" type="synonym">LIS-L1</name>
    <name evidence="17" type="synonym">REL2</name>
    <name evidence="16" type="synonym">TPL</name>
    <name evidence="21" type="ordered locus">Os08g0162100</name>
    <name evidence="18" type="ordered locus">LOC_Os08g06480</name>
    <name evidence="22" type="ORF">OsJ_26138</name>
    <name evidence="20" type="ORF">P0577B11.132</name>
</gene>
<name>TPR2_ORYSJ</name>
<proteinExistence type="evidence at protein level"/>
<dbReference type="EMBL" id="AB638269">
    <property type="protein sequence ID" value="BAL44266.1"/>
    <property type="molecule type" value="mRNA"/>
</dbReference>
<dbReference type="EMBL" id="AP005504">
    <property type="protein sequence ID" value="BAC99788.1"/>
    <property type="status" value="ALT_SEQ"/>
    <property type="molecule type" value="Genomic_DNA"/>
</dbReference>
<dbReference type="EMBL" id="AP008214">
    <property type="protein sequence ID" value="BAF22969.1"/>
    <property type="molecule type" value="Genomic_DNA"/>
</dbReference>
<dbReference type="EMBL" id="AP014964">
    <property type="protein sequence ID" value="BAT03947.1"/>
    <property type="molecule type" value="Genomic_DNA"/>
</dbReference>
<dbReference type="EMBL" id="CM000145">
    <property type="protein sequence ID" value="EAZ41606.1"/>
    <property type="status" value="ALT_SEQ"/>
    <property type="molecule type" value="Genomic_DNA"/>
</dbReference>
<dbReference type="FunCoup" id="Q0J7U6">
    <property type="interactions" value="5"/>
</dbReference>
<dbReference type="STRING" id="39947.Q0J7U6"/>
<dbReference type="PaxDb" id="39947-Q0J7U6"/>
<dbReference type="EnsemblPlants" id="Os08t0162100-01">
    <property type="protein sequence ID" value="Os08t0162100-01"/>
    <property type="gene ID" value="Os08g0162100"/>
</dbReference>
<dbReference type="Gramene" id="Os08t0162100-01">
    <property type="protein sequence ID" value="Os08t0162100-01"/>
    <property type="gene ID" value="Os08g0162100"/>
</dbReference>
<dbReference type="KEGG" id="dosa:Os08g0162100"/>
<dbReference type="eggNOG" id="KOG0266">
    <property type="taxonomic scope" value="Eukaryota"/>
</dbReference>
<dbReference type="HOGENOM" id="CLU_003103_1_0_1"/>
<dbReference type="InParanoid" id="Q0J7U6"/>
<dbReference type="OMA" id="RLVHKPF"/>
<dbReference type="PlantReactome" id="R-OSA-5632095">
    <property type="pathway name" value="Brassinosteroid signaling"/>
</dbReference>
<dbReference type="PlantReactome" id="R-OSA-5654828">
    <property type="pathway name" value="Strigolactone signaling"/>
</dbReference>
<dbReference type="PlantReactome" id="R-OSA-6787011">
    <property type="pathway name" value="Jasmonic acid signaling"/>
</dbReference>
<dbReference type="PlantReactome" id="R-OSA-6788019">
    <property type="pathway name" value="Salicylic acid signaling"/>
</dbReference>
<dbReference type="PlantReactome" id="R-OSA-9608575">
    <property type="pathway name" value="Reproductive meristem phase change"/>
</dbReference>
<dbReference type="Proteomes" id="UP000000763">
    <property type="component" value="Chromosome 8"/>
</dbReference>
<dbReference type="Proteomes" id="UP000007752">
    <property type="component" value="Chromosome 8"/>
</dbReference>
<dbReference type="Proteomes" id="UP000059680">
    <property type="component" value="Chromosome 8"/>
</dbReference>
<dbReference type="ExpressionAtlas" id="Q0J7U6">
    <property type="expression patterns" value="baseline and differential"/>
</dbReference>
<dbReference type="GO" id="GO:0005634">
    <property type="term" value="C:nucleus"/>
    <property type="evidence" value="ECO:0007669"/>
    <property type="project" value="UniProtKB-SubCell"/>
</dbReference>
<dbReference type="GO" id="GO:0010229">
    <property type="term" value="P:inflorescence development"/>
    <property type="evidence" value="ECO:0000315"/>
    <property type="project" value="UniProtKB"/>
</dbReference>
<dbReference type="GO" id="GO:0006355">
    <property type="term" value="P:regulation of DNA-templated transcription"/>
    <property type="evidence" value="ECO:0000318"/>
    <property type="project" value="GO_Central"/>
</dbReference>
<dbReference type="FunFam" id="2.130.10.10:FF:000558">
    <property type="entry name" value="Topless-related protein 1"/>
    <property type="match status" value="1"/>
</dbReference>
<dbReference type="FunFam" id="2.130.10.10:FF:000479">
    <property type="entry name" value="Topless-related protein 3"/>
    <property type="match status" value="1"/>
</dbReference>
<dbReference type="FunFam" id="2.130.10.10:FF:000942">
    <property type="entry name" value="Topless-related protein 4"/>
    <property type="match status" value="1"/>
</dbReference>
<dbReference type="Gene3D" id="2.130.10.10">
    <property type="entry name" value="YVTN repeat-like/Quinoprotein amine dehydrogenase"/>
    <property type="match status" value="3"/>
</dbReference>
<dbReference type="InterPro" id="IPR006595">
    <property type="entry name" value="CTLH_C"/>
</dbReference>
<dbReference type="InterPro" id="IPR006594">
    <property type="entry name" value="LisH"/>
</dbReference>
<dbReference type="InterPro" id="IPR027728">
    <property type="entry name" value="Topless_fam"/>
</dbReference>
<dbReference type="InterPro" id="IPR048419">
    <property type="entry name" value="Topless_Znf"/>
</dbReference>
<dbReference type="InterPro" id="IPR054532">
    <property type="entry name" value="TPL_SMU1_LisH-like"/>
</dbReference>
<dbReference type="InterPro" id="IPR054080">
    <property type="entry name" value="TPR1-like_2nd"/>
</dbReference>
<dbReference type="InterPro" id="IPR015943">
    <property type="entry name" value="WD40/YVTN_repeat-like_dom_sf"/>
</dbReference>
<dbReference type="InterPro" id="IPR019775">
    <property type="entry name" value="WD40_repeat_CS"/>
</dbReference>
<dbReference type="InterPro" id="IPR036322">
    <property type="entry name" value="WD40_repeat_dom_sf"/>
</dbReference>
<dbReference type="InterPro" id="IPR001680">
    <property type="entry name" value="WD40_rpt"/>
</dbReference>
<dbReference type="PANTHER" id="PTHR44083:SF5">
    <property type="entry name" value="PROTEIN TOPLESS-RELATED PROTEIN 2"/>
    <property type="match status" value="1"/>
</dbReference>
<dbReference type="PANTHER" id="PTHR44083">
    <property type="entry name" value="TOPLESS-RELATED PROTEIN 1-RELATED"/>
    <property type="match status" value="1"/>
</dbReference>
<dbReference type="Pfam" id="PF17814">
    <property type="entry name" value="LisH_TPL"/>
    <property type="match status" value="1"/>
</dbReference>
<dbReference type="Pfam" id="PF21889">
    <property type="entry name" value="TPR1-like_2nd"/>
    <property type="match status" value="1"/>
</dbReference>
<dbReference type="Pfam" id="PF00400">
    <property type="entry name" value="WD40"/>
    <property type="match status" value="3"/>
</dbReference>
<dbReference type="Pfam" id="PF21359">
    <property type="entry name" value="zf_topless"/>
    <property type="match status" value="1"/>
</dbReference>
<dbReference type="SMART" id="SM00668">
    <property type="entry name" value="CTLH"/>
    <property type="match status" value="1"/>
</dbReference>
<dbReference type="SMART" id="SM00667">
    <property type="entry name" value="LisH"/>
    <property type="match status" value="1"/>
</dbReference>
<dbReference type="SMART" id="SM00320">
    <property type="entry name" value="WD40"/>
    <property type="match status" value="9"/>
</dbReference>
<dbReference type="SUPFAM" id="SSF117289">
    <property type="entry name" value="Nucleoporin domain"/>
    <property type="match status" value="1"/>
</dbReference>
<dbReference type="SUPFAM" id="SSF50978">
    <property type="entry name" value="WD40 repeat-like"/>
    <property type="match status" value="2"/>
</dbReference>
<dbReference type="PROSITE" id="PS50897">
    <property type="entry name" value="CTLH"/>
    <property type="match status" value="1"/>
</dbReference>
<dbReference type="PROSITE" id="PS50896">
    <property type="entry name" value="LISH"/>
    <property type="match status" value="1"/>
</dbReference>
<dbReference type="PROSITE" id="PS00678">
    <property type="entry name" value="WD_REPEATS_1"/>
    <property type="match status" value="1"/>
</dbReference>
<dbReference type="PROSITE" id="PS50082">
    <property type="entry name" value="WD_REPEATS_2"/>
    <property type="match status" value="2"/>
</dbReference>
<dbReference type="PROSITE" id="PS50294">
    <property type="entry name" value="WD_REPEATS_REGION"/>
    <property type="match status" value="2"/>
</dbReference>
<keyword id="KW-0539">Nucleus</keyword>
<keyword id="KW-1185">Reference proteome</keyword>
<keyword id="KW-0677">Repeat</keyword>
<keyword id="KW-0804">Transcription</keyword>
<keyword id="KW-0805">Transcription regulation</keyword>
<keyword id="KW-0853">WD repeat</keyword>
<sequence>MSSLSRELVFLILQFLDEEKFKETVHKLEQESAFYFNMKHFEDLVQGGEWDEVEKYLSGFTKVEDNRYSMKIFFEIRKQKYLEALDRHDRAKAVEILVKDLKVFASFNEELFKEITQLLTLENFRQNEQLSKYGDTKSARNIMLMELKKLIEANPLFRDKLNFPPFKVSRLRTLINQSLNWQHQLCKNPRPNPDIKTLFTDHSCAAPTNGARAPPPANGPLVGPIPKSAAFPPMGAHAPFQPVVSPSPNAIAGWMTNANPSLPHAAVAQGPPGLVQPPNTAAFLKHPRTPTSAPAIDYQSADSEHLMKRMRVGQPDEVSFSGASHPANIYTQDDLPKQVVRNLNQGSNVMSLDFHPVQQTILLVGTNVGDIGIWEVGSRERIAHKTFKVWDISSCTLPLQAALMKDAAISVNRCLWSPDGSILGVAFSKHIVQTYAFVLNGELRQQAEIDAHIGGVNDIAFSHPNKTLSIITCGDDKLIKVWDAQTGQKQYTFEGHEAPVYSVCPHYKESIQFIFSTAIDGKIKAWLYDCLGSRVDYDAPGHWCTTMAYSADGTRLFSCGTSKDGDSHLVEWNETEGAIKRTYNGFRKRSLGVVQFDTTRNRFLAAGDEFVVKFWDMDNTNILTTTDCDGGLPASPRLRFNREGSLLAVTANENGIKILANTDGQRLLRMLESRAYEGSRGPPQQINTKPPIVNTLGSVSNVSSPMAVNSERPDRALPTVSMSGLAPMDVSRTPDVKPRITDESEKVKTWKLADIGDSGHLRALRMPDTSATSSKVVRLLYTNNGVALLALGSNAVHKLWKWQRTDRNPNGKSTASFTPQMWQPANGILMANDTSDGNPEEATACIALSKNDSYVMSASGGKVSLFNMMTFKVMTTFMAPPPAATFLAFHPQDNNIIAIGMEDSTIQIYNVRVDEVKSKLKGHSKKITGLAFSQSMNMLVSSGADAQLCAWSIDGWEKKKSRYIQSPANRSGALVGDTRVQFHNDQTHILVVHESQLAIYDAKLECLRSWSPREALPAPISSAIYSCDGLLIYAGFCDGAIGVFEAESLRLRCRIAPSAYIPPSMSSGGSVYPMVVAAHPLEPNQIAVGMSDGAVHVVEPLDSDPKWGVAPPQDNGTHPTISAAPAAANKPEV</sequence>
<accession>Q0J7U6</accession>
<accession>Q7EYE2</accession>
<reference key="1">
    <citation type="journal article" date="2012" name="Plant J.">
        <title>Aberrant spikelet and panicle1, encoding a TOPLESS-related transcriptional co-repressor, is involved in the regulation of meristem fate in rice.</title>
        <authorList>
            <person name="Yoshida A."/>
            <person name="Ohmori Y."/>
            <person name="Kitano H."/>
            <person name="Taguchi-Shiobara F."/>
            <person name="Hirano H."/>
        </authorList>
    </citation>
    <scope>NUCLEOTIDE SEQUENCE [MRNA]</scope>
    <scope>FUNCTION</scope>
    <scope>DISRUPTION PHENOTYPE</scope>
    <scope>SUBCELLULAR LOCATION</scope>
    <scope>TISSUE SPECIFICITY</scope>
    <scope>GENE FAMILY</scope>
    <scope>NOMENCLATURE</scope>
</reference>
<reference key="2">
    <citation type="journal article" date="2005" name="Nature">
        <title>The map-based sequence of the rice genome.</title>
        <authorList>
            <consortium name="International rice genome sequencing project (IRGSP)"/>
        </authorList>
    </citation>
    <scope>NUCLEOTIDE SEQUENCE [LARGE SCALE GENOMIC DNA]</scope>
    <source>
        <strain>cv. Nipponbare</strain>
    </source>
</reference>
<reference key="3">
    <citation type="journal article" date="2008" name="Nucleic Acids Res.">
        <title>The rice annotation project database (RAP-DB): 2008 update.</title>
        <authorList>
            <consortium name="The rice annotation project (RAP)"/>
        </authorList>
    </citation>
    <scope>GENOME REANNOTATION</scope>
    <source>
        <strain>cv. Nipponbare</strain>
    </source>
</reference>
<reference key="4">
    <citation type="journal article" date="2013" name="Rice">
        <title>Improvement of the Oryza sativa Nipponbare reference genome using next generation sequence and optical map data.</title>
        <authorList>
            <person name="Kawahara Y."/>
            <person name="de la Bastide M."/>
            <person name="Hamilton J.P."/>
            <person name="Kanamori H."/>
            <person name="McCombie W.R."/>
            <person name="Ouyang S."/>
            <person name="Schwartz D.C."/>
            <person name="Tanaka T."/>
            <person name="Wu J."/>
            <person name="Zhou S."/>
            <person name="Childs K.L."/>
            <person name="Davidson R.M."/>
            <person name="Lin H."/>
            <person name="Quesada-Ocampo L."/>
            <person name="Vaillancourt B."/>
            <person name="Sakai H."/>
            <person name="Lee S.S."/>
            <person name="Kim J."/>
            <person name="Numa H."/>
            <person name="Itoh T."/>
            <person name="Buell C.R."/>
            <person name="Matsumoto T."/>
        </authorList>
    </citation>
    <scope>GENOME REANNOTATION</scope>
    <source>
        <strain>cv. Nipponbare</strain>
    </source>
</reference>
<reference key="5">
    <citation type="journal article" date="2005" name="PLoS Biol.">
        <title>The genomes of Oryza sativa: a history of duplications.</title>
        <authorList>
            <person name="Yu J."/>
            <person name="Wang J."/>
            <person name="Lin W."/>
            <person name="Li S."/>
            <person name="Li H."/>
            <person name="Zhou J."/>
            <person name="Ni P."/>
            <person name="Dong W."/>
            <person name="Hu S."/>
            <person name="Zeng C."/>
            <person name="Zhang J."/>
            <person name="Zhang Y."/>
            <person name="Li R."/>
            <person name="Xu Z."/>
            <person name="Li S."/>
            <person name="Li X."/>
            <person name="Zheng H."/>
            <person name="Cong L."/>
            <person name="Lin L."/>
            <person name="Yin J."/>
            <person name="Geng J."/>
            <person name="Li G."/>
            <person name="Shi J."/>
            <person name="Liu J."/>
            <person name="Lv H."/>
            <person name="Li J."/>
            <person name="Wang J."/>
            <person name="Deng Y."/>
            <person name="Ran L."/>
            <person name="Shi X."/>
            <person name="Wang X."/>
            <person name="Wu Q."/>
            <person name="Li C."/>
            <person name="Ren X."/>
            <person name="Wang J."/>
            <person name="Wang X."/>
            <person name="Li D."/>
            <person name="Liu D."/>
            <person name="Zhang X."/>
            <person name="Ji Z."/>
            <person name="Zhao W."/>
            <person name="Sun Y."/>
            <person name="Zhang Z."/>
            <person name="Bao J."/>
            <person name="Han Y."/>
            <person name="Dong L."/>
            <person name="Ji J."/>
            <person name="Chen P."/>
            <person name="Wu S."/>
            <person name="Liu J."/>
            <person name="Xiao Y."/>
            <person name="Bu D."/>
            <person name="Tan J."/>
            <person name="Yang L."/>
            <person name="Ye C."/>
            <person name="Zhang J."/>
            <person name="Xu J."/>
            <person name="Zhou Y."/>
            <person name="Yu Y."/>
            <person name="Zhang B."/>
            <person name="Zhuang S."/>
            <person name="Wei H."/>
            <person name="Liu B."/>
            <person name="Lei M."/>
            <person name="Yu H."/>
            <person name="Li Y."/>
            <person name="Xu H."/>
            <person name="Wei S."/>
            <person name="He X."/>
            <person name="Fang L."/>
            <person name="Zhang Z."/>
            <person name="Zhang Y."/>
            <person name="Huang X."/>
            <person name="Su Z."/>
            <person name="Tong W."/>
            <person name="Li J."/>
            <person name="Tong Z."/>
            <person name="Li S."/>
            <person name="Ye J."/>
            <person name="Wang L."/>
            <person name="Fang L."/>
            <person name="Lei T."/>
            <person name="Chen C.-S."/>
            <person name="Chen H.-C."/>
            <person name="Xu Z."/>
            <person name="Li H."/>
            <person name="Huang H."/>
            <person name="Zhang F."/>
            <person name="Xu H."/>
            <person name="Li N."/>
            <person name="Zhao C."/>
            <person name="Li S."/>
            <person name="Dong L."/>
            <person name="Huang Y."/>
            <person name="Li L."/>
            <person name="Xi Y."/>
            <person name="Qi Q."/>
            <person name="Li W."/>
            <person name="Zhang B."/>
            <person name="Hu W."/>
            <person name="Zhang Y."/>
            <person name="Tian X."/>
            <person name="Jiao Y."/>
            <person name="Liang X."/>
            <person name="Jin J."/>
            <person name="Gao L."/>
            <person name="Zheng W."/>
            <person name="Hao B."/>
            <person name="Liu S.-M."/>
            <person name="Wang W."/>
            <person name="Yuan L."/>
            <person name="Cao M."/>
            <person name="McDermott J."/>
            <person name="Samudrala R."/>
            <person name="Wang J."/>
            <person name="Wong G.K.-S."/>
            <person name="Yang H."/>
        </authorList>
    </citation>
    <scope>NUCLEOTIDE SEQUENCE [LARGE SCALE GENOMIC DNA]</scope>
    <source>
        <strain>cv. Nipponbare</strain>
    </source>
</reference>
<reference key="6">
    <citation type="journal article" date="2012" name="Planta">
        <title>OsLIS-L1 encoding a lissencephaly type-1-like protein with WD40 repeats is required for plant height and male gametophyte formation in rice.</title>
        <authorList>
            <person name="Gao X."/>
            <person name="Chen Z."/>
            <person name="Zhang J."/>
            <person name="Li X."/>
            <person name="Chen G."/>
            <person name="Li X."/>
            <person name="Wu C."/>
        </authorList>
    </citation>
    <scope>FUNCTION</scope>
    <scope>DISRUPTION PHENOTYPE</scope>
    <scope>TISSUE SPECIFICITY</scope>
    <scope>DEVELOPMENTAL STAGE</scope>
    <scope>SUBCELLULAR LOCATION</scope>
    <scope>GENE FAMILY</scope>
</reference>
<reference key="7">
    <citation type="journal article" date="2012" name="Plant Biotechnol. Rep.">
        <title>OsREL2, a rice TOPLESS homolog functions in axillary meristem development in rice inflorescence.</title>
        <authorList>
            <person name="Kwon Y."/>
            <person name="Yu S."/>
            <person name="Park J."/>
            <person name="Li Y."/>
            <person name="Han J.H."/>
            <person name="Alavilli H."/>
            <person name="Cho J."/>
            <person name="Kim T.H."/>
            <person name="Jeon J.S."/>
            <person name="Lee B."/>
        </authorList>
    </citation>
    <scope>FUNCTION</scope>
</reference>
<reference key="8">
    <citation type="journal article" date="2013" name="Nature">
        <title>DWARF 53 acts as a repressor of strigolactone signalling in rice.</title>
        <authorList>
            <person name="Jiang L."/>
            <person name="Liu X."/>
            <person name="Xiong G."/>
            <person name="Liu H."/>
            <person name="Chen F."/>
            <person name="Wang L."/>
            <person name="Meng X."/>
            <person name="Liu G."/>
            <person name="Yu H."/>
            <person name="Yuan Y."/>
            <person name="Yi W."/>
            <person name="Zhao L."/>
            <person name="Ma H."/>
            <person name="He Y."/>
            <person name="Wu Z."/>
            <person name="Melcher K."/>
            <person name="Qian Q."/>
            <person name="Xu H.E."/>
            <person name="Wang Y."/>
            <person name="Li J."/>
        </authorList>
    </citation>
    <scope>INTERACTION WITH D53</scope>
    <scope>GENE FAMILY</scope>
    <scope>NOMENCLATURE</scope>
</reference>
<reference key="9">
    <citation type="journal article" date="2015" name="J. Genet. Genomics">
        <title>MONOCULM 3, an ortholog of WUSCHEL in rice, is required for tiller bud formation.</title>
        <authorList>
            <person name="Lu Z."/>
            <person name="Shao G."/>
            <person name="Xiong J."/>
            <person name="Jiao Y."/>
            <person name="Wang J."/>
            <person name="Liu G."/>
            <person name="Meng X."/>
            <person name="Liang Y."/>
            <person name="Xiong G."/>
            <person name="Wang Y."/>
            <person name="Li J."/>
        </authorList>
    </citation>
    <scope>INTERACTION WITH WOX1</scope>
</reference>
<reference key="10">
    <citation type="journal article" date="2015" name="Proc. Natl. Acad. Sci. U.S.A.">
        <title>Coordinated regulation of vegetative and reproductive branching in rice.</title>
        <authorList>
            <person name="Wang L."/>
            <person name="Sun S."/>
            <person name="Jin J."/>
            <person name="Fu D."/>
            <person name="Yang X."/>
            <person name="Weng X."/>
            <person name="Xu C."/>
            <person name="Li X."/>
            <person name="Xiao J."/>
            <person name="Zhang Q."/>
        </authorList>
    </citation>
    <scope>FUNCTION</scope>
    <scope>DISRUPTION PHENOTYPE</scope>
    <scope>INTERACTION WITH AP2-3/SNB; AP2-1/TOE1 AND AP2-2/IDS1</scope>
</reference>
<reference key="11">
    <citation type="journal article" date="2015" name="Sci. Adv.">
        <title>Structural basis for recognition of diverse transcriptional repressors by the TOPLESS family of corepressors.</title>
        <authorList>
            <person name="Ke J."/>
            <person name="Ma H."/>
            <person name="Gu X."/>
            <person name="Thelen A."/>
            <person name="Brunzelle J.S."/>
            <person name="Li J."/>
            <person name="Xu H.E."/>
            <person name="Melcher K."/>
        </authorList>
    </citation>
    <scope>SUBUNIT</scope>
    <scope>DOMAIN</scope>
    <scope>NOMENCLATURE</scope>
</reference>
<reference key="12">
    <citation type="journal article" date="2020" name="Plant Physiol.">
        <title>MORE FLORET 1 encodes a MYB transcription factor that regulates spikelet development in rice.</title>
        <authorList>
            <person name="Ren D."/>
            <person name="Rao Y."/>
            <person name="Yu H."/>
            <person name="Xu Q."/>
            <person name="Cui Y."/>
            <person name="Xia S."/>
            <person name="Yu X."/>
            <person name="Liu H."/>
            <person name="Hu H."/>
            <person name="Xue D."/>
            <person name="Zeng D."/>
            <person name="Hu J."/>
            <person name="Zhang G."/>
            <person name="Gao Z."/>
            <person name="Zhu L."/>
            <person name="Zhang Q."/>
            <person name="Shen L."/>
            <person name="Guo L."/>
            <person name="Qian Q."/>
        </authorList>
    </citation>
    <scope>INTERACTION WITH MOF1</scope>
</reference>
<protein>
    <recommendedName>
        <fullName evidence="15">Protein TOPLESS-RELATED PROTEIN 2</fullName>
        <shortName evidence="15">Protein TPR2</shortName>
    </recommendedName>
    <alternativeName>
        <fullName evidence="14">Protein ABERRANT SPIKELET AND PANICLE 1</fullName>
        <shortName evidence="14">Protein ASP1</shortName>
    </alternativeName>
    <alternativeName>
        <fullName evidence="13">Protein LISSENCEPHALY TYPE-1-LIKE 1</fullName>
        <shortName evidence="13">OsLIS-L1</shortName>
        <shortName evidence="13">Protein LIS-L1</shortName>
    </alternativeName>
    <alternativeName>
        <fullName evidence="16">Protein TPL</fullName>
        <shortName evidence="16">OsTPL</shortName>
    </alternativeName>
    <alternativeName>
        <fullName evidence="17">Ramosa1 enhancer locus 2</fullName>
        <shortName evidence="17">OsREL2</shortName>
        <shortName evidence="17">Protein REL2</shortName>
    </alternativeName>
    <alternativeName>
        <fullName evidence="16">Topless-like protein</fullName>
    </alternativeName>
</protein>
<feature type="chain" id="PRO_0000435822" description="Protein TOPLESS-RELATED PROTEIN 2">
    <location>
        <begin position="1"/>
        <end position="1133"/>
    </location>
</feature>
<feature type="domain" description="LisH" evidence="3">
    <location>
        <begin position="4"/>
        <end position="36"/>
    </location>
</feature>
<feature type="domain" description="CTLH" evidence="2">
    <location>
        <begin position="34"/>
        <end position="92"/>
    </location>
</feature>
<feature type="repeat" description="WD 1" evidence="1">
    <location>
        <begin position="344"/>
        <end position="384"/>
    </location>
</feature>
<feature type="repeat" description="WD 2" evidence="1">
    <location>
        <begin position="451"/>
        <end position="492"/>
    </location>
</feature>
<feature type="repeat" description="WD 3" evidence="1">
    <location>
        <begin position="495"/>
        <end position="536"/>
    </location>
</feature>
<feature type="repeat" description="WD 4" evidence="1">
    <location>
        <begin position="539"/>
        <end position="582"/>
    </location>
</feature>
<feature type="repeat" description="WD 5" evidence="1">
    <location>
        <begin position="586"/>
        <end position="625"/>
    </location>
</feature>
<feature type="repeat" description="WD 6" evidence="1">
    <location>
        <begin position="630"/>
        <end position="669"/>
    </location>
</feature>
<feature type="repeat" description="WD 7" evidence="1">
    <location>
        <begin position="771"/>
        <end position="810"/>
    </location>
</feature>
<feature type="repeat" description="WD 8" evidence="1">
    <location>
        <begin position="838"/>
        <end position="876"/>
    </location>
</feature>
<feature type="repeat" description="WD 9" evidence="1">
    <location>
        <begin position="879"/>
        <end position="919"/>
    </location>
</feature>
<feature type="repeat" description="WD 10" evidence="1">
    <location>
        <begin position="922"/>
        <end position="961"/>
    </location>
</feature>
<feature type="repeat" description="WD 11" evidence="1">
    <location>
        <begin position="970"/>
        <end position="1011"/>
    </location>
</feature>
<feature type="repeat" description="WD 12" evidence="1">
    <location>
        <begin position="1015"/>
        <end position="1054"/>
    </location>
</feature>
<feature type="region of interest" description="Disordered" evidence="4">
    <location>
        <begin position="1102"/>
        <end position="1133"/>
    </location>
</feature>
<evidence type="ECO:0000255" key="1"/>
<evidence type="ECO:0000255" key="2">
    <source>
        <dbReference type="PROSITE-ProRule" id="PRU00058"/>
    </source>
</evidence>
<evidence type="ECO:0000255" key="3">
    <source>
        <dbReference type="PROSITE-ProRule" id="PRU00126"/>
    </source>
</evidence>
<evidence type="ECO:0000256" key="4">
    <source>
        <dbReference type="SAM" id="MobiDB-lite"/>
    </source>
</evidence>
<evidence type="ECO:0000269" key="5">
    <source>
    </source>
</evidence>
<evidence type="ECO:0000269" key="6">
    <source>
    </source>
</evidence>
<evidence type="ECO:0000269" key="7">
    <source>
    </source>
</evidence>
<evidence type="ECO:0000269" key="8">
    <source>
    </source>
</evidence>
<evidence type="ECO:0000269" key="9">
    <source>
    </source>
</evidence>
<evidence type="ECO:0000269" key="10">
    <source>
    </source>
</evidence>
<evidence type="ECO:0000269" key="11">
    <source>
    </source>
</evidence>
<evidence type="ECO:0000269" key="12">
    <source ref="7"/>
</evidence>
<evidence type="ECO:0000303" key="13">
    <source>
    </source>
</evidence>
<evidence type="ECO:0000303" key="14">
    <source>
    </source>
</evidence>
<evidence type="ECO:0000303" key="15">
    <source>
    </source>
</evidence>
<evidence type="ECO:0000303" key="16">
    <source>
    </source>
</evidence>
<evidence type="ECO:0000303" key="17">
    <source ref="7"/>
</evidence>
<evidence type="ECO:0000305" key="18"/>
<evidence type="ECO:0000305" key="19">
    <source>
    </source>
</evidence>
<evidence type="ECO:0000312" key="20">
    <source>
        <dbReference type="EMBL" id="BAC99788.1"/>
    </source>
</evidence>
<evidence type="ECO:0000312" key="21">
    <source>
        <dbReference type="EMBL" id="BAF22969.1"/>
    </source>
</evidence>
<evidence type="ECO:0000312" key="22">
    <source>
        <dbReference type="EMBL" id="EAZ41606.1"/>
    </source>
</evidence>
<evidence type="ECO:0000312" key="23">
    <source>
        <dbReference type="Proteomes" id="UP000059680"/>
    </source>
</evidence>
<comment type="function">
    <text evidence="5 6 10 12 19">Transcriptional corepressor involved in branch formation regulation, presumably by suppressing primary branch formation and promoting secondary branch formation (PubMed:22136599, PubMed:24336200, Ref.7). Required for the cell elongation in the first internode and pollen development (PubMed:22020753). Probable downstream regulator of strigolactones signaling important in axillary meristem maintenance (PubMed:22136599, PubMed:24336200, Ref.7). Acts in auxin signaling and is associated with the regulation of histone deacetylation (PubMed:22136599). Essential for the function of miR172 microRNA and its target genes in regulating panicle development (PubMed:26631749).</text>
</comment>
<comment type="subunit">
    <text evidence="7 8 9 10 11">Tetramer (PubMed:26601214). Interacts with D53, probably via the EAR motifs (PubMed:24336200). Binds to AP2-1/TOE1, AP2-3/SNB and AP2-2/IDS1 (PubMed:26631749). Interacts with WOX1 (PubMed:24336200, PubMed:25697101, PubMed:26601214, PubMed:26631749). Interacts with MOF1 (PubMed:32680975).</text>
</comment>
<comment type="subcellular location">
    <subcellularLocation>
        <location evidence="5 6">Nucleus</location>
    </subcellularLocation>
</comment>
<comment type="tissue specificity">
    <text evidence="5 6">Expressed in stems and panicles. Detected in roots, seeds, leaves and sheath (PubMed:22020753). Expressed in the meristem and lateral organ primordia (PubMed:22136599).</text>
</comment>
<comment type="developmental stage">
    <text evidence="5">Highest expression in endosperm at 7 days after pollination.</text>
</comment>
<comment type="domain">
    <text evidence="9">The N-terminal TOPLESS domain (TPD) (1-210) binds directly to a 12-amino acid LxLxL EAR motif peptide.</text>
</comment>
<comment type="disruption phenotype">
    <text evidence="5 6 10">Semi-dwarf, with reduced male fertility and shorter panicles with arrested branches and abnormal spikelets.</text>
</comment>
<comment type="sequence caution" evidence="18">
    <conflict type="erroneous gene model prediction">
        <sequence resource="EMBL-CDS" id="BAC99788"/>
    </conflict>
</comment>
<comment type="sequence caution" evidence="18">
    <conflict type="erroneous gene model prediction">
        <sequence resource="EMBL-CDS" id="EAZ41606"/>
    </conflict>
</comment>
<organism evidence="23">
    <name type="scientific">Oryza sativa subsp. japonica</name>
    <name type="common">Rice</name>
    <dbReference type="NCBI Taxonomy" id="39947"/>
    <lineage>
        <taxon>Eukaryota</taxon>
        <taxon>Viridiplantae</taxon>
        <taxon>Streptophyta</taxon>
        <taxon>Embryophyta</taxon>
        <taxon>Tracheophyta</taxon>
        <taxon>Spermatophyta</taxon>
        <taxon>Magnoliopsida</taxon>
        <taxon>Liliopsida</taxon>
        <taxon>Poales</taxon>
        <taxon>Poaceae</taxon>
        <taxon>BOP clade</taxon>
        <taxon>Oryzoideae</taxon>
        <taxon>Oryzeae</taxon>
        <taxon>Oryzinae</taxon>
        <taxon>Oryza</taxon>
        <taxon>Oryza sativa</taxon>
    </lineage>
</organism>